<accession>B0R4Q9</accession>
<comment type="similarity">
    <text evidence="1">Belongs to the UPF0173 family.</text>
</comment>
<keyword id="KW-0378">Hydrolase</keyword>
<reference key="1">
    <citation type="journal article" date="2008" name="Genomics">
        <title>Evolution in the laboratory: the genome of Halobacterium salinarum strain R1 compared to that of strain NRC-1.</title>
        <authorList>
            <person name="Pfeiffer F."/>
            <person name="Schuster S.C."/>
            <person name="Broicher A."/>
            <person name="Falb M."/>
            <person name="Palm P."/>
            <person name="Rodewald K."/>
            <person name="Ruepp A."/>
            <person name="Soppa J."/>
            <person name="Tittor J."/>
            <person name="Oesterhelt D."/>
        </authorList>
    </citation>
    <scope>NUCLEOTIDE SEQUENCE [LARGE SCALE GENOMIC DNA]</scope>
    <source>
        <strain>ATCC 29341 / DSM 671 / R1</strain>
    </source>
</reference>
<dbReference type="EMBL" id="AM774415">
    <property type="protein sequence ID" value="CAP13724.1"/>
    <property type="molecule type" value="Genomic_DNA"/>
</dbReference>
<dbReference type="RefSeq" id="WP_010902743.1">
    <property type="nucleotide sequence ID" value="NC_010364.1"/>
</dbReference>
<dbReference type="SMR" id="B0R4Q9"/>
<dbReference type="EnsemblBacteria" id="CAP13724">
    <property type="protein sequence ID" value="CAP13724"/>
    <property type="gene ID" value="OE_2513F"/>
</dbReference>
<dbReference type="KEGG" id="hsl:OE_2513F"/>
<dbReference type="HOGENOM" id="CLU_070010_4_0_2"/>
<dbReference type="PhylomeDB" id="B0R4Q9"/>
<dbReference type="Proteomes" id="UP000001321">
    <property type="component" value="Chromosome"/>
</dbReference>
<dbReference type="GO" id="GO:0016787">
    <property type="term" value="F:hydrolase activity"/>
    <property type="evidence" value="ECO:0007669"/>
    <property type="project" value="UniProtKB-UniRule"/>
</dbReference>
<dbReference type="Gene3D" id="3.60.15.10">
    <property type="entry name" value="Ribonuclease Z/Hydroxyacylglutathione hydrolase-like"/>
    <property type="match status" value="1"/>
</dbReference>
<dbReference type="HAMAP" id="MF_00457">
    <property type="entry name" value="UPF0173"/>
    <property type="match status" value="1"/>
</dbReference>
<dbReference type="InterPro" id="IPR001279">
    <property type="entry name" value="Metallo-B-lactamas"/>
</dbReference>
<dbReference type="InterPro" id="IPR036866">
    <property type="entry name" value="RibonucZ/Hydroxyglut_hydro"/>
</dbReference>
<dbReference type="InterPro" id="IPR022877">
    <property type="entry name" value="UPF0173"/>
</dbReference>
<dbReference type="InterPro" id="IPR050114">
    <property type="entry name" value="UPF0173_UPF0282_UlaG_hydrolase"/>
</dbReference>
<dbReference type="NCBIfam" id="NF001911">
    <property type="entry name" value="PRK00685.1"/>
    <property type="match status" value="1"/>
</dbReference>
<dbReference type="PANTHER" id="PTHR43546:SF3">
    <property type="entry name" value="UPF0173 METAL-DEPENDENT HYDROLASE MJ1163"/>
    <property type="match status" value="1"/>
</dbReference>
<dbReference type="PANTHER" id="PTHR43546">
    <property type="entry name" value="UPF0173 METAL-DEPENDENT HYDROLASE MJ1163-RELATED"/>
    <property type="match status" value="1"/>
</dbReference>
<dbReference type="Pfam" id="PF13483">
    <property type="entry name" value="Lactamase_B_3"/>
    <property type="match status" value="1"/>
</dbReference>
<dbReference type="SMART" id="SM00849">
    <property type="entry name" value="Lactamase_B"/>
    <property type="match status" value="1"/>
</dbReference>
<dbReference type="SUPFAM" id="SSF56281">
    <property type="entry name" value="Metallo-hydrolase/oxidoreductase"/>
    <property type="match status" value="1"/>
</dbReference>
<gene>
    <name type="ordered locus">OE_2513F</name>
</gene>
<protein>
    <recommendedName>
        <fullName evidence="1">UPF0173 metal-dependent hydrolase OE_2513F</fullName>
    </recommendedName>
</protein>
<evidence type="ECO:0000255" key="1">
    <source>
        <dbReference type="HAMAP-Rule" id="MF_00457"/>
    </source>
</evidence>
<sequence>MELTWFGHSTWRVTVGTTDLLVDPFFDNPHTDTAPSEVAVDHVLLTHGHADHIAHVGAFADTHTVGTPEVTGYVADETGVEDTTGMNLGGTVELGDAFVTMVRADHTNGLETGYEYSGGTPVGYVISDAAPTQTGDGDATTFYHAGDTSLQSEMKDVIGPYLDPDAAAVPVGDHFTMGPMQAAVAVDWLDVDVAFPMHYDTFPPIEVDTADFEREVNATGSQADVHVLDGDETVDLSDAL</sequence>
<feature type="chain" id="PRO_0000367226" description="UPF0173 metal-dependent hydrolase OE_2513F">
    <location>
        <begin position="1"/>
        <end position="240"/>
    </location>
</feature>
<name>Y2513_HALS3</name>
<organism>
    <name type="scientific">Halobacterium salinarum (strain ATCC 29341 / DSM 671 / R1)</name>
    <dbReference type="NCBI Taxonomy" id="478009"/>
    <lineage>
        <taxon>Archaea</taxon>
        <taxon>Methanobacteriati</taxon>
        <taxon>Methanobacteriota</taxon>
        <taxon>Stenosarchaea group</taxon>
        <taxon>Halobacteria</taxon>
        <taxon>Halobacteriales</taxon>
        <taxon>Halobacteriaceae</taxon>
        <taxon>Halobacterium</taxon>
        <taxon>Halobacterium salinarum NRC-34001</taxon>
    </lineage>
</organism>
<proteinExistence type="inferred from homology"/>